<sequence>MGRVSTEALPSGLLNWVAVWRRNFLAWKKVAPASLLGNLADPMIYIFGLGSGLGVMLGNVGGVSYSAFLAAGMVATSAMTASTFETIYATFARMRDHRTWEAMLYTKLTLGDIVLGEMAWAATKASLAGTAIGIVTATLAYSEWDSLIYVFPVIALTGLAFASLSMVVAALAPSYDYLVFYQSLVITPMLVLSGSVFPVEQLSPMLQRITHLLPLAHSIDLIRPAMLGHPVPDITLHLGALCLYIVLPFFVSIALLRRRLTQ</sequence>
<feature type="chain" id="PRO_0000182986" description="Nodulation protein J">
    <location>
        <begin position="1"/>
        <end position="262"/>
    </location>
</feature>
<feature type="transmembrane region" description="Helical" evidence="2">
    <location>
        <begin position="43"/>
        <end position="63"/>
    </location>
</feature>
<feature type="transmembrane region" description="Helical" evidence="2">
    <location>
        <begin position="67"/>
        <end position="87"/>
    </location>
</feature>
<feature type="transmembrane region" description="Helical" evidence="2">
    <location>
        <begin position="119"/>
        <end position="139"/>
    </location>
</feature>
<feature type="transmembrane region" description="Helical" evidence="2">
    <location>
        <begin position="148"/>
        <end position="168"/>
    </location>
</feature>
<feature type="transmembrane region" description="Helical" evidence="2">
    <location>
        <begin position="177"/>
        <end position="197"/>
    </location>
</feature>
<feature type="transmembrane region" description="Helical" evidence="2">
    <location>
        <begin position="236"/>
        <end position="256"/>
    </location>
</feature>
<feature type="domain" description="ABC transmembrane type-2" evidence="3">
    <location>
        <begin position="33"/>
        <end position="259"/>
    </location>
</feature>
<dbReference type="EMBL" id="X87578">
    <property type="protein sequence ID" value="CAA60882.1"/>
    <property type="molecule type" value="Genomic_DNA"/>
</dbReference>
<dbReference type="RefSeq" id="WP_041365337.1">
    <property type="nucleotide sequence ID" value="NZ_JANFGR010000056.1"/>
</dbReference>
<dbReference type="SMR" id="P50333"/>
<dbReference type="TCDB" id="3.A.1.102.1">
    <property type="family name" value="the atp-binding cassette (abc) superfamily"/>
</dbReference>
<dbReference type="GO" id="GO:0043190">
    <property type="term" value="C:ATP-binding cassette (ABC) transporter complex"/>
    <property type="evidence" value="ECO:0007669"/>
    <property type="project" value="InterPro"/>
</dbReference>
<dbReference type="GO" id="GO:0140359">
    <property type="term" value="F:ABC-type transporter activity"/>
    <property type="evidence" value="ECO:0007669"/>
    <property type="project" value="InterPro"/>
</dbReference>
<dbReference type="GO" id="GO:0015772">
    <property type="term" value="P:oligosaccharide transport"/>
    <property type="evidence" value="ECO:0007669"/>
    <property type="project" value="InterPro"/>
</dbReference>
<dbReference type="InterPro" id="IPR013525">
    <property type="entry name" value="ABC2_TM"/>
</dbReference>
<dbReference type="InterPro" id="IPR047817">
    <property type="entry name" value="ABC2_TM_bact-type"/>
</dbReference>
<dbReference type="InterPro" id="IPR000412">
    <property type="entry name" value="ABC_2_transport"/>
</dbReference>
<dbReference type="InterPro" id="IPR005981">
    <property type="entry name" value="ABC_transptNodJ"/>
</dbReference>
<dbReference type="InterPro" id="IPR051784">
    <property type="entry name" value="Nod_factor_ABC_transporter"/>
</dbReference>
<dbReference type="NCBIfam" id="TIGR01291">
    <property type="entry name" value="nodJ"/>
    <property type="match status" value="1"/>
</dbReference>
<dbReference type="PANTHER" id="PTHR43229">
    <property type="entry name" value="NODULATION PROTEIN J"/>
    <property type="match status" value="1"/>
</dbReference>
<dbReference type="PANTHER" id="PTHR43229:SF2">
    <property type="entry name" value="NODULATION PROTEIN J"/>
    <property type="match status" value="1"/>
</dbReference>
<dbReference type="Pfam" id="PF01061">
    <property type="entry name" value="ABC2_membrane"/>
    <property type="match status" value="1"/>
</dbReference>
<dbReference type="PIRSF" id="PIRSF006648">
    <property type="entry name" value="DrrB"/>
    <property type="match status" value="1"/>
</dbReference>
<dbReference type="PRINTS" id="PR00164">
    <property type="entry name" value="ABC2TRNSPORT"/>
</dbReference>
<dbReference type="PROSITE" id="PS51012">
    <property type="entry name" value="ABC_TM2"/>
    <property type="match status" value="1"/>
</dbReference>
<comment type="function">
    <text evidence="1">Part of the ABC transporter complex NodIJ involved in the export of the nodulation factors (Nod factors), the bacterial signal molecules that induce symbiosis and subsequent nodulation induction. Nod factors are LCO (lipo-chitin oligosaccharide), a modified beta-1,4-linked N-acetylglucosamine oligosaccharide. This subunit encodes the transporter (By similarity).</text>
</comment>
<comment type="subunit">
    <text evidence="4">The complex is composed of two ATP-binding proteins (NodI) and two transmembrane proteins (NodJ).</text>
</comment>
<comment type="subcellular location">
    <subcellularLocation>
        <location evidence="4">Cell inner membrane</location>
        <topology evidence="4">Multi-pass membrane protein</topology>
    </subcellularLocation>
</comment>
<comment type="similarity">
    <text evidence="4">Belongs to the ABC-2 integral membrane protein family. Lipooligosaccharide exporter (TC 3.A.1.102) subfamily.</text>
</comment>
<proteinExistence type="inferred from homology"/>
<evidence type="ECO:0000250" key="1"/>
<evidence type="ECO:0000255" key="2"/>
<evidence type="ECO:0000255" key="3">
    <source>
        <dbReference type="PROSITE-ProRule" id="PRU00442"/>
    </source>
</evidence>
<evidence type="ECO:0000305" key="4"/>
<accession>P50333</accession>
<gene>
    <name type="primary">nodJ</name>
</gene>
<protein>
    <recommendedName>
        <fullName>Nodulation protein J</fullName>
    </recommendedName>
</protein>
<reference key="1">
    <citation type="journal article" date="1999" name="FEMS Microbiol. Lett.">
        <title>Identification of nodulation promoter (nod-box) regions of Rhizobium galegae.</title>
        <authorList>
            <person name="Suominen L."/>
            <person name="Paulin L."/>
            <person name="Saano A."/>
            <person name="Saren A.-M."/>
            <person name="Tas E."/>
            <person name="Lindstroem K."/>
        </authorList>
    </citation>
    <scope>NUCLEOTIDE SEQUENCE [GENOMIC DNA]</scope>
    <source>
        <strain>HAMBI 1174</strain>
    </source>
</reference>
<organism>
    <name type="scientific">Neorhizobium galegae</name>
    <name type="common">Rhizobium galegae</name>
    <dbReference type="NCBI Taxonomy" id="399"/>
    <lineage>
        <taxon>Bacteria</taxon>
        <taxon>Pseudomonadati</taxon>
        <taxon>Pseudomonadota</taxon>
        <taxon>Alphaproteobacteria</taxon>
        <taxon>Hyphomicrobiales</taxon>
        <taxon>Rhizobiaceae</taxon>
        <taxon>Rhizobium/Agrobacterium group</taxon>
        <taxon>Neorhizobium</taxon>
    </lineage>
</organism>
<keyword id="KW-0997">Cell inner membrane</keyword>
<keyword id="KW-1003">Cell membrane</keyword>
<keyword id="KW-0472">Membrane</keyword>
<keyword id="KW-0536">Nodulation</keyword>
<keyword id="KW-0812">Transmembrane</keyword>
<keyword id="KW-1133">Transmembrane helix</keyword>
<keyword id="KW-0813">Transport</keyword>
<name>NODJ_NEOGA</name>